<dbReference type="EMBL" id="AF303741">
    <property type="protein sequence ID" value="AAB94441.1"/>
    <property type="molecule type" value="Genomic_DNA"/>
</dbReference>
<dbReference type="PIR" id="T03067">
    <property type="entry name" value="T03067"/>
</dbReference>
<dbReference type="RefSeq" id="NP_149578.1">
    <property type="nucleotide sequence ID" value="NC_003038.1"/>
</dbReference>
<dbReference type="KEGG" id="vg:1733326"/>
<dbReference type="OrthoDB" id="28272at10239"/>
<dbReference type="Proteomes" id="UP000001359">
    <property type="component" value="Genome"/>
</dbReference>
<dbReference type="InterPro" id="IPR043888">
    <property type="entry name" value="DUF5844"/>
</dbReference>
<dbReference type="Pfam" id="PF19162">
    <property type="entry name" value="DUF5844"/>
    <property type="match status" value="1"/>
</dbReference>
<sequence>MSLEEKVKNDKKQQVHTILKLMSTTINYISHPSITKSLECNLNCKSLFQLFKNLNINSFLNIKFEQKNDILIFKDTEALKVLYVLIVIINESDHPLYPCYLEWIKENAWMEESMKLFTLIKY</sequence>
<proteinExistence type="inferred from homology"/>
<accession>O55730</accession>
<comment type="similarity">
    <text evidence="1">Belongs to the IIV-6 115R family.</text>
</comment>
<name>VF115_IIV6</name>
<feature type="chain" id="PRO_0000377994" description="Uncharacterized protein 115R">
    <location>
        <begin position="1"/>
        <end position="122"/>
    </location>
</feature>
<keyword id="KW-1185">Reference proteome</keyword>
<reference key="1">
    <citation type="journal article" date="2001" name="Virology">
        <title>Analysis of the first complete DNA sequence of an invertebrate iridovirus: coding strategy of the genome of Chilo iridescent virus.</title>
        <authorList>
            <person name="Jakob N.J."/>
            <person name="Mueller K."/>
            <person name="Bahr U."/>
            <person name="Darai G."/>
        </authorList>
    </citation>
    <scope>NUCLEOTIDE SEQUENCE [LARGE SCALE GENOMIC DNA]</scope>
</reference>
<reference key="2">
    <citation type="journal article" date="2007" name="Virol. J.">
        <title>Comparative genomic analysis of the family Iridoviridae: re-annotating and defining the core set of iridovirus genes.</title>
        <authorList>
            <person name="Eaton H.E."/>
            <person name="Metcalf J."/>
            <person name="Penny E."/>
            <person name="Tcherepanov V."/>
            <person name="Upton C."/>
            <person name="Brunetti C.R."/>
        </authorList>
    </citation>
    <scope>GENOME REANNOTATION</scope>
</reference>
<protein>
    <recommendedName>
        <fullName>Uncharacterized protein 115R</fullName>
    </recommendedName>
</protein>
<gene>
    <name type="ORF">IIV6-115R</name>
</gene>
<organismHost>
    <name type="scientific">Acheta domesticus</name>
    <name type="common">House cricket</name>
    <dbReference type="NCBI Taxonomy" id="6997"/>
</organismHost>
<organismHost>
    <name type="scientific">Chilo suppressalis</name>
    <name type="common">Asiatic rice borer moth</name>
    <dbReference type="NCBI Taxonomy" id="168631"/>
</organismHost>
<organismHost>
    <name type="scientific">Gryllus bimaculatus</name>
    <name type="common">Two-spotted cricket</name>
    <dbReference type="NCBI Taxonomy" id="6999"/>
</organismHost>
<organismHost>
    <name type="scientific">Gryllus campestris</name>
    <dbReference type="NCBI Taxonomy" id="58607"/>
</organismHost>
<organismHost>
    <name type="scientific">Spodoptera frugiperda</name>
    <name type="common">Fall armyworm</name>
    <dbReference type="NCBI Taxonomy" id="7108"/>
</organismHost>
<evidence type="ECO:0000305" key="1"/>
<organism>
    <name type="scientific">Invertebrate iridescent virus 6</name>
    <name type="common">IIV-6</name>
    <name type="synonym">Chilo iridescent virus</name>
    <dbReference type="NCBI Taxonomy" id="176652"/>
    <lineage>
        <taxon>Viruses</taxon>
        <taxon>Varidnaviria</taxon>
        <taxon>Bamfordvirae</taxon>
        <taxon>Nucleocytoviricota</taxon>
        <taxon>Megaviricetes</taxon>
        <taxon>Pimascovirales</taxon>
        <taxon>Iridoviridae</taxon>
        <taxon>Betairidovirinae</taxon>
        <taxon>Iridovirus</taxon>
    </lineage>
</organism>